<proteinExistence type="inferred from homology"/>
<name>YBEY_BLOFL</name>
<gene>
    <name evidence="1" type="primary">ybeY</name>
    <name type="ordered locus">Bfl316</name>
</gene>
<accession>Q7VRA3</accession>
<evidence type="ECO:0000255" key="1">
    <source>
        <dbReference type="HAMAP-Rule" id="MF_00009"/>
    </source>
</evidence>
<reference key="1">
    <citation type="journal article" date="2003" name="Proc. Natl. Acad. Sci. U.S.A.">
        <title>The genome sequence of Blochmannia floridanus: comparative analysis of reduced genomes.</title>
        <authorList>
            <person name="Gil R."/>
            <person name="Silva F.J."/>
            <person name="Zientz E."/>
            <person name="Delmotte F."/>
            <person name="Gonzalez-Candelas F."/>
            <person name="Latorre A."/>
            <person name="Rausell C."/>
            <person name="Kamerbeek J."/>
            <person name="Gadau J."/>
            <person name="Hoelldobler B."/>
            <person name="van Ham R.C.H.J."/>
            <person name="Gross R."/>
            <person name="Moya A."/>
        </authorList>
    </citation>
    <scope>NUCLEOTIDE SEQUENCE [LARGE SCALE GENOMIC DNA]</scope>
</reference>
<dbReference type="EC" id="3.1.-.-" evidence="1"/>
<dbReference type="EMBL" id="BX248583">
    <property type="protein sequence ID" value="CAD83386.1"/>
    <property type="molecule type" value="Genomic_DNA"/>
</dbReference>
<dbReference type="SMR" id="Q7VRA3"/>
<dbReference type="STRING" id="203907.Bfl316"/>
<dbReference type="KEGG" id="bfl:Bfl316"/>
<dbReference type="eggNOG" id="COG0319">
    <property type="taxonomic scope" value="Bacteria"/>
</dbReference>
<dbReference type="HOGENOM" id="CLU_106710_0_1_6"/>
<dbReference type="OrthoDB" id="9807740at2"/>
<dbReference type="Proteomes" id="UP000002192">
    <property type="component" value="Chromosome"/>
</dbReference>
<dbReference type="GO" id="GO:0005737">
    <property type="term" value="C:cytoplasm"/>
    <property type="evidence" value="ECO:0007669"/>
    <property type="project" value="UniProtKB-SubCell"/>
</dbReference>
<dbReference type="GO" id="GO:0004222">
    <property type="term" value="F:metalloendopeptidase activity"/>
    <property type="evidence" value="ECO:0007669"/>
    <property type="project" value="InterPro"/>
</dbReference>
<dbReference type="GO" id="GO:0004521">
    <property type="term" value="F:RNA endonuclease activity"/>
    <property type="evidence" value="ECO:0007669"/>
    <property type="project" value="UniProtKB-UniRule"/>
</dbReference>
<dbReference type="GO" id="GO:0008270">
    <property type="term" value="F:zinc ion binding"/>
    <property type="evidence" value="ECO:0007669"/>
    <property type="project" value="UniProtKB-UniRule"/>
</dbReference>
<dbReference type="GO" id="GO:0006364">
    <property type="term" value="P:rRNA processing"/>
    <property type="evidence" value="ECO:0007669"/>
    <property type="project" value="UniProtKB-UniRule"/>
</dbReference>
<dbReference type="Gene3D" id="3.40.390.30">
    <property type="entry name" value="Metalloproteases ('zincins'), catalytic domain"/>
    <property type="match status" value="1"/>
</dbReference>
<dbReference type="HAMAP" id="MF_00009">
    <property type="entry name" value="Endoribonucl_YbeY"/>
    <property type="match status" value="1"/>
</dbReference>
<dbReference type="InterPro" id="IPR023091">
    <property type="entry name" value="MetalPrtase_cat_dom_sf_prd"/>
</dbReference>
<dbReference type="InterPro" id="IPR002036">
    <property type="entry name" value="YbeY"/>
</dbReference>
<dbReference type="InterPro" id="IPR020549">
    <property type="entry name" value="YbeY_CS"/>
</dbReference>
<dbReference type="NCBIfam" id="TIGR00043">
    <property type="entry name" value="rRNA maturation RNase YbeY"/>
    <property type="match status" value="1"/>
</dbReference>
<dbReference type="PANTHER" id="PTHR46986">
    <property type="entry name" value="ENDORIBONUCLEASE YBEY, CHLOROPLASTIC"/>
    <property type="match status" value="1"/>
</dbReference>
<dbReference type="PANTHER" id="PTHR46986:SF1">
    <property type="entry name" value="ENDORIBONUCLEASE YBEY, CHLOROPLASTIC"/>
    <property type="match status" value="1"/>
</dbReference>
<dbReference type="Pfam" id="PF02130">
    <property type="entry name" value="YbeY"/>
    <property type="match status" value="1"/>
</dbReference>
<dbReference type="SUPFAM" id="SSF55486">
    <property type="entry name" value="Metalloproteases ('zincins'), catalytic domain"/>
    <property type="match status" value="1"/>
</dbReference>
<dbReference type="PROSITE" id="PS01306">
    <property type="entry name" value="UPF0054"/>
    <property type="match status" value="1"/>
</dbReference>
<comment type="function">
    <text evidence="1">Single strand-specific metallo-endoribonuclease involved in late-stage 70S ribosome quality control and in maturation of the 3' terminus of the 16S rRNA.</text>
</comment>
<comment type="cofactor">
    <cofactor evidence="1">
        <name>Zn(2+)</name>
        <dbReference type="ChEBI" id="CHEBI:29105"/>
    </cofactor>
    <text evidence="1">Binds 1 zinc ion.</text>
</comment>
<comment type="subcellular location">
    <subcellularLocation>
        <location evidence="1">Cytoplasm</location>
    </subcellularLocation>
</comment>
<comment type="similarity">
    <text evidence="1">Belongs to the endoribonuclease YbeY family.</text>
</comment>
<sequence length="153" mass="17851">MVSRVILNLQLVCANTQGIPANNKIKLWIKKIFFSSKKKIELTIRIVDIQEMLYLNWYYLGKKYPTNVLSFPFEPPSEIQTSLLGDIVICKQIIEYENRKNNIFSDVHWAHMIIHGSLHLLGYDHICDEDAELMNAMELNIIRTLGYKTCCFL</sequence>
<organism>
    <name type="scientific">Blochmanniella floridana</name>
    <dbReference type="NCBI Taxonomy" id="203907"/>
    <lineage>
        <taxon>Bacteria</taxon>
        <taxon>Pseudomonadati</taxon>
        <taxon>Pseudomonadota</taxon>
        <taxon>Gammaproteobacteria</taxon>
        <taxon>Enterobacterales</taxon>
        <taxon>Enterobacteriaceae</taxon>
        <taxon>ant endosymbionts</taxon>
        <taxon>Candidatus Blochmanniella</taxon>
    </lineage>
</organism>
<protein>
    <recommendedName>
        <fullName evidence="1">Endoribonuclease YbeY</fullName>
        <ecNumber evidence="1">3.1.-.-</ecNumber>
    </recommendedName>
</protein>
<keyword id="KW-0963">Cytoplasm</keyword>
<keyword id="KW-0255">Endonuclease</keyword>
<keyword id="KW-0378">Hydrolase</keyword>
<keyword id="KW-0479">Metal-binding</keyword>
<keyword id="KW-0540">Nuclease</keyword>
<keyword id="KW-1185">Reference proteome</keyword>
<keyword id="KW-0690">Ribosome biogenesis</keyword>
<keyword id="KW-0698">rRNA processing</keyword>
<keyword id="KW-0862">Zinc</keyword>
<feature type="chain" id="PRO_0000102432" description="Endoribonuclease YbeY">
    <location>
        <begin position="1"/>
        <end position="153"/>
    </location>
</feature>
<feature type="binding site" evidence="1">
    <location>
        <position position="115"/>
    </location>
    <ligand>
        <name>Zn(2+)</name>
        <dbReference type="ChEBI" id="CHEBI:29105"/>
        <note>catalytic</note>
    </ligand>
</feature>
<feature type="binding site" evidence="1">
    <location>
        <position position="119"/>
    </location>
    <ligand>
        <name>Zn(2+)</name>
        <dbReference type="ChEBI" id="CHEBI:29105"/>
        <note>catalytic</note>
    </ligand>
</feature>
<feature type="binding site" evidence="1">
    <location>
        <position position="125"/>
    </location>
    <ligand>
        <name>Zn(2+)</name>
        <dbReference type="ChEBI" id="CHEBI:29105"/>
        <note>catalytic</note>
    </ligand>
</feature>